<feature type="chain" id="PRO_0000217370" description="Probable protein-export membrane protein secG">
    <location>
        <begin position="1"/>
        <end position="71"/>
    </location>
</feature>
<feature type="transmembrane region" description="Helical" evidence="1">
    <location>
        <begin position="4"/>
        <end position="24"/>
    </location>
</feature>
<feature type="transmembrane region" description="Helical" evidence="1">
    <location>
        <begin position="50"/>
        <end position="70"/>
    </location>
</feature>
<sequence>MEQILKFLWYISTIILVFSILIHNPKSEGLGTIGSQNQFFSNTRSTENTLNKVTWLFLALFLLFTTILAIN</sequence>
<protein>
    <recommendedName>
        <fullName>Probable protein-export membrane protein secG</fullName>
    </recommendedName>
</protein>
<keyword id="KW-0150">Chloroplast</keyword>
<keyword id="KW-0472">Membrane</keyword>
<keyword id="KW-0934">Plastid</keyword>
<keyword id="KW-0653">Protein transport</keyword>
<keyword id="KW-0793">Thylakoid</keyword>
<keyword id="KW-0811">Translocation</keyword>
<keyword id="KW-0812">Transmembrane</keyword>
<keyword id="KW-1133">Transmembrane helix</keyword>
<keyword id="KW-0813">Transport</keyword>
<comment type="function">
    <text evidence="2">Involved in protein export. Participates in an early event of protein translocation across the chloroplast thylakoid membrane (Potential).</text>
</comment>
<comment type="subcellular location">
    <subcellularLocation>
        <location evidence="2">Plastid</location>
        <location evidence="2">Chloroplast thylakoid membrane</location>
        <topology evidence="2">Multi-pass membrane protein</topology>
    </subcellularLocation>
</comment>
<comment type="similarity">
    <text evidence="2">Belongs to the SecG family.</text>
</comment>
<dbReference type="EMBL" id="U38804">
    <property type="protein sequence ID" value="AAC08160.1"/>
    <property type="molecule type" value="Genomic_DNA"/>
</dbReference>
<dbReference type="PIR" id="S73195">
    <property type="entry name" value="S73195"/>
</dbReference>
<dbReference type="SMR" id="P51274"/>
<dbReference type="GO" id="GO:0009535">
    <property type="term" value="C:chloroplast thylakoid membrane"/>
    <property type="evidence" value="ECO:0007669"/>
    <property type="project" value="UniProtKB-SubCell"/>
</dbReference>
<dbReference type="GO" id="GO:0015450">
    <property type="term" value="F:protein-transporting ATPase activity"/>
    <property type="evidence" value="ECO:0007669"/>
    <property type="project" value="InterPro"/>
</dbReference>
<dbReference type="GO" id="GO:0009306">
    <property type="term" value="P:protein secretion"/>
    <property type="evidence" value="ECO:0007669"/>
    <property type="project" value="InterPro"/>
</dbReference>
<dbReference type="InterPro" id="IPR004692">
    <property type="entry name" value="SecG"/>
</dbReference>
<dbReference type="NCBIfam" id="TIGR00810">
    <property type="entry name" value="secG"/>
    <property type="match status" value="1"/>
</dbReference>
<dbReference type="Pfam" id="PF03840">
    <property type="entry name" value="SecG"/>
    <property type="match status" value="1"/>
</dbReference>
<gene>
    <name type="primary">secG</name>
    <name type="synonym">ycf47</name>
</gene>
<name>SECG_PORPU</name>
<geneLocation type="chloroplast"/>
<proteinExistence type="inferred from homology"/>
<organism>
    <name type="scientific">Porphyra purpurea</name>
    <name type="common">Red seaweed</name>
    <name type="synonym">Ulva purpurea</name>
    <dbReference type="NCBI Taxonomy" id="2787"/>
    <lineage>
        <taxon>Eukaryota</taxon>
        <taxon>Rhodophyta</taxon>
        <taxon>Bangiophyceae</taxon>
        <taxon>Bangiales</taxon>
        <taxon>Bangiaceae</taxon>
        <taxon>Porphyra</taxon>
    </lineage>
</organism>
<reference key="1">
    <citation type="journal article" date="1995" name="Plant Mol. Biol. Rep.">
        <title>Complete nucleotide sequence of the Porphyra purpurea chloroplast genome.</title>
        <authorList>
            <person name="Reith M.E."/>
            <person name="Munholland J."/>
        </authorList>
    </citation>
    <scope>NUCLEOTIDE SEQUENCE [LARGE SCALE GENOMIC DNA]</scope>
    <source>
        <strain>Avonport</strain>
    </source>
</reference>
<evidence type="ECO:0000255" key="1"/>
<evidence type="ECO:0000305" key="2"/>
<accession>P51274</accession>